<gene>
    <name type="ordered locus">MIMI_L438</name>
</gene>
<reference key="1">
    <citation type="journal article" date="2004" name="Science">
        <title>The 1.2-megabase genome sequence of Mimivirus.</title>
        <authorList>
            <person name="Raoult D."/>
            <person name="Audic S."/>
            <person name="Robert C."/>
            <person name="Abergel C."/>
            <person name="Renesto P."/>
            <person name="Ogata H."/>
            <person name="La Scola B."/>
            <person name="Susan M."/>
            <person name="Claverie J.-M."/>
        </authorList>
    </citation>
    <scope>NUCLEOTIDE SEQUENCE [LARGE SCALE GENOMIC DNA]</scope>
    <source>
        <strain>Rowbotham-Bradford</strain>
    </source>
</reference>
<organism>
    <name type="scientific">Acanthamoeba polyphaga mimivirus</name>
    <name type="common">APMV</name>
    <dbReference type="NCBI Taxonomy" id="212035"/>
    <lineage>
        <taxon>Viruses</taxon>
        <taxon>Varidnaviria</taxon>
        <taxon>Bamfordvirae</taxon>
        <taxon>Nucleocytoviricota</taxon>
        <taxon>Megaviricetes</taxon>
        <taxon>Imitervirales</taxon>
        <taxon>Mimiviridae</taxon>
        <taxon>Megamimivirinae</taxon>
        <taxon>Mimivirus</taxon>
        <taxon>Mimivirus bradfordmassiliense</taxon>
    </lineage>
</organism>
<comment type="subcellular location">
    <subcellularLocation>
        <location evidence="3">Membrane</location>
        <topology evidence="3">Multi-pass membrane protein</topology>
    </subcellularLocation>
</comment>
<keyword id="KW-0472">Membrane</keyword>
<keyword id="KW-1185">Reference proteome</keyword>
<keyword id="KW-0812">Transmembrane</keyword>
<keyword id="KW-1133">Transmembrane helix</keyword>
<accession>Q5UQN8</accession>
<feature type="chain" id="PRO_0000243993" description="Putative TLC domain-containing protein L438">
    <location>
        <begin position="1"/>
        <end position="200"/>
    </location>
</feature>
<feature type="transmembrane region" description="Helical" evidence="1">
    <location>
        <begin position="9"/>
        <end position="29"/>
    </location>
</feature>
<feature type="transmembrane region" description="Helical" evidence="1">
    <location>
        <begin position="43"/>
        <end position="63"/>
    </location>
</feature>
<feature type="transmembrane region" description="Helical" evidence="1">
    <location>
        <begin position="74"/>
        <end position="94"/>
    </location>
</feature>
<feature type="transmembrane region" description="Helical" evidence="1">
    <location>
        <begin position="96"/>
        <end position="116"/>
    </location>
</feature>
<feature type="transmembrane region" description="Helical" evidence="1">
    <location>
        <begin position="131"/>
        <end position="151"/>
    </location>
</feature>
<feature type="transmembrane region" description="Helical" evidence="1">
    <location>
        <begin position="165"/>
        <end position="185"/>
    </location>
</feature>
<feature type="domain" description="TLC" evidence="2">
    <location>
        <begin position="1"/>
        <end position="193"/>
    </location>
</feature>
<protein>
    <recommendedName>
        <fullName>Putative TLC domain-containing protein L438</fullName>
    </recommendedName>
</protein>
<organismHost>
    <name type="scientific">Acanthamoeba polyphaga</name>
    <name type="common">Amoeba</name>
    <dbReference type="NCBI Taxonomy" id="5757"/>
</organismHost>
<name>YL438_MIMIV</name>
<dbReference type="EMBL" id="AY653733">
    <property type="protein sequence ID" value="AAV50706.1"/>
    <property type="molecule type" value="Genomic_DNA"/>
</dbReference>
<dbReference type="SMR" id="Q5UQN8"/>
<dbReference type="KEGG" id="vg:9925062"/>
<dbReference type="OrthoDB" id="24378at10239"/>
<dbReference type="Proteomes" id="UP000001134">
    <property type="component" value="Genome"/>
</dbReference>
<dbReference type="GO" id="GO:0016020">
    <property type="term" value="C:membrane"/>
    <property type="evidence" value="ECO:0007669"/>
    <property type="project" value="UniProtKB-SubCell"/>
</dbReference>
<dbReference type="GO" id="GO:0055088">
    <property type="term" value="P:lipid homeostasis"/>
    <property type="evidence" value="ECO:0007669"/>
    <property type="project" value="TreeGrafter"/>
</dbReference>
<dbReference type="InterPro" id="IPR006634">
    <property type="entry name" value="TLC-dom"/>
</dbReference>
<dbReference type="InterPro" id="IPR050846">
    <property type="entry name" value="TLCD"/>
</dbReference>
<dbReference type="PANTHER" id="PTHR13439">
    <property type="entry name" value="CT120 PROTEIN"/>
    <property type="match status" value="1"/>
</dbReference>
<dbReference type="PANTHER" id="PTHR13439:SF0">
    <property type="entry name" value="TOPOISOMERASE I DAMAGE AFFECTED PROTEIN 4"/>
    <property type="match status" value="1"/>
</dbReference>
<dbReference type="Pfam" id="PF03798">
    <property type="entry name" value="TRAM_LAG1_CLN8"/>
    <property type="match status" value="1"/>
</dbReference>
<dbReference type="SMART" id="SM00724">
    <property type="entry name" value="TLC"/>
    <property type="match status" value="1"/>
</dbReference>
<dbReference type="PROSITE" id="PS50922">
    <property type="entry name" value="TLC"/>
    <property type="match status" value="1"/>
</dbReference>
<proteinExistence type="predicted"/>
<evidence type="ECO:0000255" key="1"/>
<evidence type="ECO:0000255" key="2">
    <source>
        <dbReference type="PROSITE-ProRule" id="PRU00205"/>
    </source>
</evidence>
<evidence type="ECO:0000305" key="3"/>
<sequence length="200" mass="24078">MDYKQSNLFLFPIGLGSTYIFYKKICGTFCSIDNDLEVNPYLTHGILMLTLVYFLSDYYLMIVKYNPKHNVYFVHHFIGIVSIYFSYMKYYYLIKYLFAYLTFELSTPFLNIAIKYRNQGVYNKCSIFSELAFFILFTVVRIIFGTYLWFVTSNTLSSIEYPYNYLIVLPTILQFLNYWWYYRILKILRAKLFGCINKED</sequence>